<geneLocation type="plasmid">
    <name>pWR100</name>
</geneLocation>
<geneLocation type="plasmid">
    <name>pWR501</name>
</geneLocation>
<geneLocation type="plasmid">
    <name>pMYSH6000</name>
</geneLocation>
<geneLocation type="plasmid">
    <name>pCP301</name>
</geneLocation>
<reference key="1">
    <citation type="journal article" date="1992" name="J. Bacteriol.">
        <title>Surface presentation of Shigella flexneri invasion plasmid antigens requires the products of the spa locus.</title>
        <authorList>
            <person name="Venkatesan M.M."/>
            <person name="Buysse J.M."/>
            <person name="Oaks E.V."/>
        </authorList>
    </citation>
    <scope>NUCLEOTIDE SEQUENCE [GENOMIC DNA]</scope>
    <source>
        <strain>M90T / Serotype 5a</strain>
        <plasmid>pWR100</plasmid>
    </source>
</reference>
<reference key="2">
    <citation type="journal article" date="2000" name="Mol. Microbiol.">
        <title>The virulence plasmid pWR100 and the repertoire of proteins secreted by the type III secretion apparatus of Shigella flexneri.</title>
        <authorList>
            <person name="Buchrieser C."/>
            <person name="Glaser P."/>
            <person name="Rusniok C."/>
            <person name="Nedjari H."/>
            <person name="d'Hauteville H."/>
            <person name="Kunst F."/>
            <person name="Sansonetti P.J."/>
            <person name="Parsot C."/>
        </authorList>
    </citation>
    <scope>NUCLEOTIDE SEQUENCE [GENOMIC DNA]</scope>
    <source>
        <strain>M90T / Serotype 5a</strain>
        <plasmid>pWR100</plasmid>
    </source>
</reference>
<reference key="3">
    <citation type="journal article" date="2001" name="Infect. Immun.">
        <title>Complete DNA sequence and analysis of the large virulence plasmid of Shigella flexneri.</title>
        <authorList>
            <person name="Venkatesan M.M."/>
            <person name="Goldberg M.B."/>
            <person name="Rose D.J."/>
            <person name="Grotbeck E.J."/>
            <person name="Burland V."/>
            <person name="Blattner F.R."/>
        </authorList>
    </citation>
    <scope>NUCLEOTIDE SEQUENCE [GENOMIC DNA]</scope>
    <source>
        <strain>M90T / Serotype 5a</strain>
        <plasmid>pWR501</plasmid>
    </source>
</reference>
<reference key="4">
    <citation type="journal article" date="1993" name="J. Bacteriol.">
        <title>Eight genes in region 5 that form an operon are essential for invasion of epithelial cells by Shigella flexneri 2a.</title>
        <authorList>
            <person name="Sasakawa C."/>
            <person name="Komatsu K."/>
            <person name="Tobe T."/>
            <person name="Suzuki T."/>
            <person name="Yoshikawa M."/>
        </authorList>
    </citation>
    <scope>NUCLEOTIDE SEQUENCE [GENOMIC DNA]</scope>
    <source>
        <strain>YSH6000 / Serotype 2a</strain>
        <plasmid>pMYSH6000</plasmid>
    </source>
</reference>
<reference key="5">
    <citation type="journal article" date="2002" name="Nucleic Acids Res.">
        <title>Genome sequence of Shigella flexneri 2a: insights into pathogenicity through comparison with genomes of Escherichia coli K12 and O157.</title>
        <authorList>
            <person name="Jin Q."/>
            <person name="Yuan Z."/>
            <person name="Xu J."/>
            <person name="Wang Y."/>
            <person name="Shen Y."/>
            <person name="Lu W."/>
            <person name="Wang J."/>
            <person name="Liu H."/>
            <person name="Yang J."/>
            <person name="Yang F."/>
            <person name="Zhang X."/>
            <person name="Zhang J."/>
            <person name="Yang G."/>
            <person name="Wu H."/>
            <person name="Qu D."/>
            <person name="Dong J."/>
            <person name="Sun L."/>
            <person name="Xue Y."/>
            <person name="Zhao A."/>
            <person name="Gao Y."/>
            <person name="Zhu J."/>
            <person name="Kan B."/>
            <person name="Ding K."/>
            <person name="Chen S."/>
            <person name="Cheng H."/>
            <person name="Yao Z."/>
            <person name="He B."/>
            <person name="Chen R."/>
            <person name="Ma D."/>
            <person name="Qiang B."/>
            <person name="Wen Y."/>
            <person name="Hou Y."/>
            <person name="Yu J."/>
        </authorList>
    </citation>
    <scope>NUCLEOTIDE SEQUENCE [LARGE SCALE GENOMIC DNA]</scope>
    <source>
        <strain>301 / Serotype 2a</strain>
        <plasmid>pCP301</plasmid>
    </source>
</reference>
<reference key="6">
    <citation type="journal article" date="2004" name="EMBO Rep.">
        <title>Structure of Spa15, a type III secretion chaperone from Shigella flexneri with broad specificity.</title>
        <authorList>
            <person name="van Eerde A."/>
            <person name="Hamiaux C."/>
            <person name="Perez J."/>
            <person name="Parsot C."/>
            <person name="Dijkstra B.W."/>
        </authorList>
    </citation>
    <scope>X-RAY CRYSTALLOGRAPHY (1.82 ANGSTROMS)</scope>
    <scope>SUBUNIT</scope>
    <scope>FUNCTION</scope>
</reference>
<evidence type="ECO:0000269" key="1">
    <source>
    </source>
</evidence>
<evidence type="ECO:0000305" key="2"/>
<evidence type="ECO:0007829" key="3">
    <source>
        <dbReference type="PDB" id="1RY9"/>
    </source>
</evidence>
<dbReference type="EMBL" id="M81458">
    <property type="protein sequence ID" value="AAA26540.1"/>
    <property type="molecule type" value="Genomic_DNA"/>
</dbReference>
<dbReference type="EMBL" id="AL391753">
    <property type="protein sequence ID" value="CAC05823.1"/>
    <property type="molecule type" value="Genomic_DNA"/>
</dbReference>
<dbReference type="EMBL" id="AF348706">
    <property type="protein sequence ID" value="AAK18467.1"/>
    <property type="molecule type" value="Genomic_DNA"/>
</dbReference>
<dbReference type="EMBL" id="D13663">
    <property type="protein sequence ID" value="BAA02824.1"/>
    <property type="molecule type" value="Genomic_DNA"/>
</dbReference>
<dbReference type="EMBL" id="AF386526">
    <property type="protein sequence ID" value="AAL72308.1"/>
    <property type="molecule type" value="Genomic_DNA"/>
</dbReference>
<dbReference type="PIR" id="B42284">
    <property type="entry name" value="B42284"/>
</dbReference>
<dbReference type="RefSeq" id="NP_085311.1">
    <property type="nucleotide sequence ID" value="NC_002698.1"/>
</dbReference>
<dbReference type="RefSeq" id="NP_858281.1">
    <property type="nucleotide sequence ID" value="NC_004851.1"/>
</dbReference>
<dbReference type="RefSeq" id="WP_000065502.1">
    <property type="nucleotide sequence ID" value="NZ_WPGU01000437.1"/>
</dbReference>
<dbReference type="RefSeq" id="YP_009062505.1">
    <property type="nucleotide sequence ID" value="NC_024996.1"/>
</dbReference>
<dbReference type="PDB" id="1RY9">
    <property type="method" value="X-ray"/>
    <property type="resolution" value="1.82 A"/>
    <property type="chains" value="A/B/C/D=1-133"/>
</dbReference>
<dbReference type="PDB" id="2XGA">
    <property type="method" value="X-ray"/>
    <property type="resolution" value="2.30 A"/>
    <property type="chains" value="A/B=1-133"/>
</dbReference>
<dbReference type="PDBsum" id="1RY9"/>
<dbReference type="PDBsum" id="2XGA"/>
<dbReference type="SMR" id="P35530"/>
<dbReference type="TCDB" id="3.A.6.1.2">
    <property type="family name" value="the type iii (virulence-related) secretory pathway (iiisp) family"/>
</dbReference>
<dbReference type="PaxDb" id="198214-CP0148"/>
<dbReference type="GeneID" id="1238004"/>
<dbReference type="KEGG" id="sfl:CP0148"/>
<dbReference type="HOGENOM" id="CLU_125441_0_0_6"/>
<dbReference type="EvolutionaryTrace" id="P35530"/>
<dbReference type="Proteomes" id="UP000001006">
    <property type="component" value="Plasmid pCP301"/>
</dbReference>
<dbReference type="CDD" id="cd17035">
    <property type="entry name" value="T3SC_IB_Spa15-like"/>
    <property type="match status" value="1"/>
</dbReference>
<dbReference type="Gene3D" id="3.30.1460.10">
    <property type="match status" value="1"/>
</dbReference>
<dbReference type="InterPro" id="IPR003065">
    <property type="entry name" value="Invas_SpaK"/>
</dbReference>
<dbReference type="Pfam" id="PF03519">
    <property type="entry name" value="Invas_SpaK"/>
    <property type="match status" value="1"/>
</dbReference>
<dbReference type="PRINTS" id="PR01305">
    <property type="entry name" value="SSPAKPROTEIN"/>
</dbReference>
<dbReference type="SUPFAM" id="SSF69635">
    <property type="entry name" value="Type III secretory system chaperone-like"/>
    <property type="match status" value="1"/>
</dbReference>
<comment type="function">
    <text evidence="1">Required for surface presentation of invasion plasmid antigens. Chaperone specialized in the storage of effectors within the bacterial cytoplasm, maintaining them in a secretion-competent state, and allowing their immediate delivery to target cells upon contact of the bacterium with the host cells. Has been shown to chaperone IpaA, IpgB1, OspC3 and probably also OspB.</text>
</comment>
<comment type="subunit">
    <text evidence="1">Homodimer.</text>
</comment>
<comment type="similarity">
    <text evidence="2">Belongs to the SpaK family.</text>
</comment>
<proteinExistence type="evidence at protein level"/>
<gene>
    <name type="primary">spaK</name>
    <name type="synonym">spa15</name>
    <name type="ordered locus">CP0148</name>
</gene>
<organism>
    <name type="scientific">Shigella flexneri</name>
    <dbReference type="NCBI Taxonomy" id="623"/>
    <lineage>
        <taxon>Bacteria</taxon>
        <taxon>Pseudomonadati</taxon>
        <taxon>Pseudomonadota</taxon>
        <taxon>Gammaproteobacteria</taxon>
        <taxon>Enterobacterales</taxon>
        <taxon>Enterobacteriaceae</taxon>
        <taxon>Shigella</taxon>
    </lineage>
</organism>
<keyword id="KW-0002">3D-structure</keyword>
<keyword id="KW-0143">Chaperone</keyword>
<keyword id="KW-0614">Plasmid</keyword>
<keyword id="KW-1185">Reference proteome</keyword>
<keyword id="KW-0843">Virulence</keyword>
<sequence>MSNINLVQLVRDSLFTIGCPPSIITDLDSHSAITISLDSMPAINIALVNEQVMLWANFDAPSDVKLQSSAYNILNLMLMNFSYSINELVELHRSDEYLQLRVVIKDDYVHDGIVFAEILHEFYQRMEILNGVL</sequence>
<name>SPAK_SHIFL</name>
<accession>P35530</accession>
<feature type="chain" id="PRO_0000180966" description="Surface presentation of antigens protein SpaK">
    <location>
        <begin position="1"/>
        <end position="133"/>
    </location>
</feature>
<feature type="helix" evidence="3">
    <location>
        <begin position="4"/>
        <end position="17"/>
    </location>
</feature>
<feature type="helix" evidence="3">
    <location>
        <begin position="21"/>
        <end position="23"/>
    </location>
</feature>
<feature type="strand" evidence="3">
    <location>
        <begin position="24"/>
        <end position="28"/>
    </location>
</feature>
<feature type="strand" evidence="3">
    <location>
        <begin position="33"/>
        <end position="37"/>
    </location>
</feature>
<feature type="strand" evidence="3">
    <location>
        <begin position="40"/>
        <end position="48"/>
    </location>
</feature>
<feature type="strand" evidence="3">
    <location>
        <begin position="51"/>
        <end position="59"/>
    </location>
</feature>
<feature type="helix" evidence="3">
    <location>
        <begin position="63"/>
        <end position="77"/>
    </location>
</feature>
<feature type="strand" evidence="3">
    <location>
        <begin position="90"/>
        <end position="93"/>
    </location>
</feature>
<feature type="strand" evidence="3">
    <location>
        <begin position="95"/>
        <end position="104"/>
    </location>
</feature>
<feature type="helix" evidence="3">
    <location>
        <begin position="106"/>
        <end position="108"/>
    </location>
</feature>
<feature type="helix" evidence="3">
    <location>
        <begin position="112"/>
        <end position="132"/>
    </location>
</feature>
<protein>
    <recommendedName>
        <fullName>Surface presentation of antigens protein SpaK</fullName>
    </recommendedName>
    <alternativeName>
        <fullName>Class 1B type III secretion system chaperone spa15</fullName>
    </alternativeName>
</protein>